<name>PHNC_STAS1</name>
<proteinExistence type="inferred from homology"/>
<comment type="function">
    <text evidence="1">Part of the ABC transporter complex PhnCDE involved in phosphonates import. Responsible for energy coupling to the transport system.</text>
</comment>
<comment type="catalytic activity">
    <reaction evidence="1">
        <text>phosphonate(out) + ATP + H2O = phosphonate(in) + ADP + phosphate + H(+)</text>
        <dbReference type="Rhea" id="RHEA:18065"/>
        <dbReference type="ChEBI" id="CHEBI:15377"/>
        <dbReference type="ChEBI" id="CHEBI:15378"/>
        <dbReference type="ChEBI" id="CHEBI:16215"/>
        <dbReference type="ChEBI" id="CHEBI:30616"/>
        <dbReference type="ChEBI" id="CHEBI:43474"/>
        <dbReference type="ChEBI" id="CHEBI:456216"/>
        <dbReference type="EC" id="7.3.2.2"/>
    </reaction>
</comment>
<comment type="subunit">
    <text evidence="1">The complex is composed of two ATP-binding proteins (PhnC), two transmembrane proteins (PhnE) and a solute-binding protein (PhnD).</text>
</comment>
<comment type="subcellular location">
    <subcellularLocation>
        <location evidence="1">Cell membrane</location>
        <topology evidence="1">Peripheral membrane protein</topology>
    </subcellularLocation>
</comment>
<comment type="similarity">
    <text evidence="1">Belongs to the ABC transporter superfamily. Phosphonates importer (TC 3.A.1.9.1) family.</text>
</comment>
<comment type="sequence caution" evidence="2">
    <conflict type="erroneous initiation">
        <sequence resource="EMBL-CDS" id="BAE18571"/>
    </conflict>
</comment>
<dbReference type="EC" id="7.3.2.2" evidence="1"/>
<dbReference type="EMBL" id="AP008934">
    <property type="protein sequence ID" value="BAE18571.1"/>
    <property type="status" value="ALT_INIT"/>
    <property type="molecule type" value="Genomic_DNA"/>
</dbReference>
<dbReference type="RefSeq" id="WP_041784901.1">
    <property type="nucleotide sequence ID" value="NC_007350.1"/>
</dbReference>
<dbReference type="SMR" id="Q49XC6"/>
<dbReference type="GeneID" id="3615365"/>
<dbReference type="KEGG" id="ssp:SSP1426"/>
<dbReference type="PATRIC" id="fig|342451.11.peg.1430"/>
<dbReference type="eggNOG" id="COG3638">
    <property type="taxonomic scope" value="Bacteria"/>
</dbReference>
<dbReference type="HOGENOM" id="CLU_000604_1_22_9"/>
<dbReference type="OrthoDB" id="9802264at2"/>
<dbReference type="Proteomes" id="UP000006371">
    <property type="component" value="Chromosome"/>
</dbReference>
<dbReference type="GO" id="GO:0005886">
    <property type="term" value="C:plasma membrane"/>
    <property type="evidence" value="ECO:0007669"/>
    <property type="project" value="UniProtKB-SubCell"/>
</dbReference>
<dbReference type="GO" id="GO:0015416">
    <property type="term" value="F:ABC-type phosphonate transporter activity"/>
    <property type="evidence" value="ECO:0007669"/>
    <property type="project" value="UniProtKB-EC"/>
</dbReference>
<dbReference type="GO" id="GO:0005524">
    <property type="term" value="F:ATP binding"/>
    <property type="evidence" value="ECO:0007669"/>
    <property type="project" value="UniProtKB-KW"/>
</dbReference>
<dbReference type="GO" id="GO:0016887">
    <property type="term" value="F:ATP hydrolysis activity"/>
    <property type="evidence" value="ECO:0007669"/>
    <property type="project" value="InterPro"/>
</dbReference>
<dbReference type="CDD" id="cd03256">
    <property type="entry name" value="ABC_PhnC_transporter"/>
    <property type="match status" value="1"/>
</dbReference>
<dbReference type="Gene3D" id="3.40.50.300">
    <property type="entry name" value="P-loop containing nucleotide triphosphate hydrolases"/>
    <property type="match status" value="1"/>
</dbReference>
<dbReference type="InterPro" id="IPR003593">
    <property type="entry name" value="AAA+_ATPase"/>
</dbReference>
<dbReference type="InterPro" id="IPR003439">
    <property type="entry name" value="ABC_transporter-like_ATP-bd"/>
</dbReference>
<dbReference type="InterPro" id="IPR017871">
    <property type="entry name" value="ABC_transporter-like_CS"/>
</dbReference>
<dbReference type="InterPro" id="IPR012693">
    <property type="entry name" value="ABC_transpr_PhnC"/>
</dbReference>
<dbReference type="InterPro" id="IPR050086">
    <property type="entry name" value="MetN_ABC_transporter-like"/>
</dbReference>
<dbReference type="InterPro" id="IPR027417">
    <property type="entry name" value="P-loop_NTPase"/>
</dbReference>
<dbReference type="NCBIfam" id="TIGR02315">
    <property type="entry name" value="ABC_phnC"/>
    <property type="match status" value="1"/>
</dbReference>
<dbReference type="PANTHER" id="PTHR43166">
    <property type="entry name" value="AMINO ACID IMPORT ATP-BINDING PROTEIN"/>
    <property type="match status" value="1"/>
</dbReference>
<dbReference type="PANTHER" id="PTHR43166:SF6">
    <property type="entry name" value="PHOSPHONATES IMPORT ATP-BINDING PROTEIN PHNC"/>
    <property type="match status" value="1"/>
</dbReference>
<dbReference type="Pfam" id="PF00005">
    <property type="entry name" value="ABC_tran"/>
    <property type="match status" value="1"/>
</dbReference>
<dbReference type="SMART" id="SM00382">
    <property type="entry name" value="AAA"/>
    <property type="match status" value="1"/>
</dbReference>
<dbReference type="SUPFAM" id="SSF52540">
    <property type="entry name" value="P-loop containing nucleoside triphosphate hydrolases"/>
    <property type="match status" value="1"/>
</dbReference>
<dbReference type="PROSITE" id="PS00211">
    <property type="entry name" value="ABC_TRANSPORTER_1"/>
    <property type="match status" value="1"/>
</dbReference>
<dbReference type="PROSITE" id="PS50893">
    <property type="entry name" value="ABC_TRANSPORTER_2"/>
    <property type="match status" value="1"/>
</dbReference>
<dbReference type="PROSITE" id="PS51249">
    <property type="entry name" value="PHNC"/>
    <property type="match status" value="1"/>
</dbReference>
<protein>
    <recommendedName>
        <fullName evidence="1">Phosphonates import ATP-binding protein PhnC</fullName>
        <ecNumber evidence="1">7.3.2.2</ecNumber>
    </recommendedName>
</protein>
<reference key="1">
    <citation type="journal article" date="2005" name="Proc. Natl. Acad. Sci. U.S.A.">
        <title>Whole genome sequence of Staphylococcus saprophyticus reveals the pathogenesis of uncomplicated urinary tract infection.</title>
        <authorList>
            <person name="Kuroda M."/>
            <person name="Yamashita A."/>
            <person name="Hirakawa H."/>
            <person name="Kumano M."/>
            <person name="Morikawa K."/>
            <person name="Higashide M."/>
            <person name="Maruyama A."/>
            <person name="Inose Y."/>
            <person name="Matoba K."/>
            <person name="Toh H."/>
            <person name="Kuhara S."/>
            <person name="Hattori M."/>
            <person name="Ohta T."/>
        </authorList>
    </citation>
    <scope>NUCLEOTIDE SEQUENCE [LARGE SCALE GENOMIC DNA]</scope>
    <source>
        <strain>ATCC 15305 / DSM 20229 / NCIMB 8711 / NCTC 7292 / S-41</strain>
    </source>
</reference>
<keyword id="KW-0067">ATP-binding</keyword>
<keyword id="KW-1003">Cell membrane</keyword>
<keyword id="KW-0472">Membrane</keyword>
<keyword id="KW-0547">Nucleotide-binding</keyword>
<keyword id="KW-0918">Phosphonate transport</keyword>
<keyword id="KW-1185">Reference proteome</keyword>
<keyword id="KW-1278">Translocase</keyword>
<keyword id="KW-0813">Transport</keyword>
<sequence length="257" mass="28823">MSQIEFKDVRKVYSNGHVGLDRINLNIEKGDFAVIVGLSGSGKSTLLRSINRLHDITEGEILIDGKSMTKASGNQLLEMRRNIGMIFQNFNLVKRSSVMRNVLSGRVGYHPTWKMVLGLFPKEDKIKALEALDRVNILDKYKSRSDELSGGQQQRISIARALCQEPAIILADEPVASLDPLTTKQVMDDLKRINQELGITIIINLHFVDLAREYGTRIIGLRDGQLVFDGPVERATDEAFNEIYGRSIQDEEKLGVN</sequence>
<organism>
    <name type="scientific">Staphylococcus saprophyticus subsp. saprophyticus (strain ATCC 15305 / DSM 20229 / NCIMB 8711 / NCTC 7292 / S-41)</name>
    <dbReference type="NCBI Taxonomy" id="342451"/>
    <lineage>
        <taxon>Bacteria</taxon>
        <taxon>Bacillati</taxon>
        <taxon>Bacillota</taxon>
        <taxon>Bacilli</taxon>
        <taxon>Bacillales</taxon>
        <taxon>Staphylococcaceae</taxon>
        <taxon>Staphylococcus</taxon>
    </lineage>
</organism>
<gene>
    <name evidence="1" type="primary">phnC</name>
    <name type="ordered locus">SSP1426</name>
</gene>
<feature type="chain" id="PRO_0000274761" description="Phosphonates import ATP-binding protein PhnC">
    <location>
        <begin position="1"/>
        <end position="257"/>
    </location>
</feature>
<feature type="domain" description="ABC transporter" evidence="1">
    <location>
        <begin position="4"/>
        <end position="248"/>
    </location>
</feature>
<feature type="binding site" evidence="1">
    <location>
        <begin position="37"/>
        <end position="44"/>
    </location>
    <ligand>
        <name>ATP</name>
        <dbReference type="ChEBI" id="CHEBI:30616"/>
    </ligand>
</feature>
<accession>Q49XC6</accession>
<evidence type="ECO:0000255" key="1">
    <source>
        <dbReference type="HAMAP-Rule" id="MF_01713"/>
    </source>
</evidence>
<evidence type="ECO:0000305" key="2"/>